<keyword id="KW-0456">Lyase</keyword>
<protein>
    <recommendedName>
        <fullName>Probable phycoerythrobilin lyase CpeT</fullName>
        <ecNumber>4.-.-.-</ecNumber>
    </recommendedName>
</protein>
<comment type="function">
    <text evidence="1">May attach a phycoerythrobiline (PEB) chromophore to apo-biliprotein(s).</text>
</comment>
<comment type="induction">
    <text evidence="2">Induced under green light, it is part of the cpeESTR operon.</text>
</comment>
<comment type="similarity">
    <text evidence="3">Belongs to the CpcT/CpeT biliprotein lyase family.</text>
</comment>
<accession>Q9ALZ7</accession>
<organism>
    <name type="scientific">Microchaete diplosiphon</name>
    <name type="common">Fremyella diplosiphon</name>
    <dbReference type="NCBI Taxonomy" id="1197"/>
    <lineage>
        <taxon>Bacteria</taxon>
        <taxon>Bacillati</taxon>
        <taxon>Cyanobacteriota</taxon>
        <taxon>Cyanophyceae</taxon>
        <taxon>Nostocales</taxon>
        <taxon>Rivulariaceae</taxon>
        <taxon>Microchaete</taxon>
    </lineage>
</organism>
<gene>
    <name type="primary">cpeT</name>
</gene>
<reference key="1">
    <citation type="journal article" date="2002" name="Mol. Microbiol.">
        <title>CpeR is an activator required for expression of the phycoerythrin operon (cpeBA) in the cyanobacterium Fremyella diplosiphon and is encoded in the phycoerythrin linker-polypeptide operon (cpeCDESTR).</title>
        <authorList>
            <person name="Cobley J.G."/>
            <person name="Clark A.C."/>
            <person name="Weerasurya S."/>
            <person name="Queseda F.A."/>
            <person name="Xiao J.Y."/>
            <person name="Bandrapali N."/>
            <person name="D'Silva I."/>
            <person name="Thounaojam M."/>
            <person name="Oda J.F."/>
            <person name="Sumiyoshi T."/>
            <person name="Chu M.H."/>
        </authorList>
    </citation>
    <scope>NUCLEOTIDE SEQUENCE [GENOMIC DNA]</scope>
    <scope>INDUCTION</scope>
    <scope>OPERON STRUCTURE</scope>
    <source>
        <strain>UTEX 481 / PCC 7601 / SAG 1410-2</strain>
    </source>
</reference>
<evidence type="ECO:0000250" key="1"/>
<evidence type="ECO:0000269" key="2">
    <source>
    </source>
</evidence>
<evidence type="ECO:0000305" key="3"/>
<name>CPET_MICDP</name>
<sequence length="207" mass="24023">MTSSLPKIPDTVSPNLITLARWMAGDFSNYQQAFENSKDYAHIHVFFRPLPFEFFSGIGLYSEQVYDYDLWRPYRQGVHRLIDKGDEIYIENYSLKQALYYAGAARDLNILKTITPNCIERRYHCSMIFKREGDKFIGGVEPGNLCLIEKNGCQTYLDSYVEITETTWVSLDKGMDVNTHQQVWGSTFGPLRFEKRESFADEIPNIL</sequence>
<feature type="chain" id="PRO_0000403152" description="Probable phycoerythrobilin lyase CpeT">
    <location>
        <begin position="1"/>
        <end position="207"/>
    </location>
</feature>
<dbReference type="EC" id="4.-.-.-"/>
<dbReference type="EMBL" id="AF334109">
    <property type="protein sequence ID" value="AAK11648.1"/>
    <property type="molecule type" value="Genomic_DNA"/>
</dbReference>
<dbReference type="SMR" id="Q9ALZ7"/>
<dbReference type="GO" id="GO:0016829">
    <property type="term" value="F:lyase activity"/>
    <property type="evidence" value="ECO:0007669"/>
    <property type="project" value="UniProtKB-KW"/>
</dbReference>
<dbReference type="CDD" id="cd16338">
    <property type="entry name" value="CpcT"/>
    <property type="match status" value="1"/>
</dbReference>
<dbReference type="Gene3D" id="2.40.128.590">
    <property type="entry name" value="CpcT/CpeT domain"/>
    <property type="match status" value="1"/>
</dbReference>
<dbReference type="HAMAP" id="MF_01460">
    <property type="entry name" value="Chrphore_lyase_CpxT"/>
    <property type="match status" value="1"/>
</dbReference>
<dbReference type="InterPro" id="IPR010404">
    <property type="entry name" value="CpcT/CpeT"/>
</dbReference>
<dbReference type="InterPro" id="IPR038672">
    <property type="entry name" value="CpcT/CpeT_sf"/>
</dbReference>
<dbReference type="PANTHER" id="PTHR35137">
    <property type="entry name" value="CHROMOPHORE LYASE CRL, CHLOROPLASTIC"/>
    <property type="match status" value="1"/>
</dbReference>
<dbReference type="PANTHER" id="PTHR35137:SF1">
    <property type="entry name" value="CHROMOPHORE LYASE CRL, CHLOROPLASTIC"/>
    <property type="match status" value="1"/>
</dbReference>
<dbReference type="Pfam" id="PF06206">
    <property type="entry name" value="CpeT"/>
    <property type="match status" value="1"/>
</dbReference>
<proteinExistence type="evidence at transcript level"/>